<sequence length="727" mass="81032">MTPVQVPNLDVSVTSSLITTAPVTGNAATISTFTPGSPEPSMNGEEKESSYFPISENDDGTLDLFGDSELEKEQKGDNQETDYSSQYLHPTPPYTNFDDESPSSPTHPSVSNITVDGDSKKHSLQLQEEEKSSESLDSHTHPPKRVRNEDDSLTFSKTSPVSPSSLKDGASNTVTNDASNKIKSEASESASPSALQALDSTAAGSSKEHSSPHDETVKKEENDKDQYPPMTKEQHKYIHAMLRQLRRGRDSIPFRAPVDPVKQNIPDYPTIIKNPIDLGTMQKKFSSGVYSSAQHFIDDMNLMFSNCFLYNGTESPVGVMGKNLQATFERQLKQLPSAYVTSYSRPGRRPRSMTAPKGGARTRRQAAMYSNSSSGIRETMYDLKPHRRKDAAEMKFCQSVLKELLKKQHEAYAYPFYKPVNPTACGCPDYFKVIKHPMDLGTMQNKLNHNEYASMKAFEADMVLMFKNCYKFNSAGTPVHLMGKKLESIFQKLWANKPDFDSETYMGMSSVNTDYYYGDNEVFDSGDEFLEDDGEEFEAVNRQIHKLQSTLQAMKSRARSSSVSRRSRSRSLSVDIYPPITYEMQNELAEQCNYLSADQLSHVAEILRAALPHLRNTDEIEIDVSAMPPDVFYKVYYYVCKGDEIGAEALATASHTHQEKKKGRALSETEQAEKIRQLRAQLDRFSGIAQNKNTVTGNIAAYNTKSLGSDDSSSEDDGESSESSDSA</sequence>
<gene>
    <name type="ORF">SPAC631.02</name>
</gene>
<dbReference type="EMBL" id="CU329670">
    <property type="protein sequence ID" value="CAC05484.3"/>
    <property type="molecule type" value="Genomic_DNA"/>
</dbReference>
<dbReference type="EMBL" id="D89157">
    <property type="protein sequence ID" value="BAA13819.1"/>
    <property type="molecule type" value="mRNA"/>
</dbReference>
<dbReference type="PIR" id="T42517">
    <property type="entry name" value="T42517"/>
</dbReference>
<dbReference type="RefSeq" id="NP_593620.3">
    <property type="nucleotide sequence ID" value="NM_001019051.3"/>
</dbReference>
<dbReference type="SMR" id="Q9HGP4"/>
<dbReference type="BioGRID" id="279846">
    <property type="interactions" value="190"/>
</dbReference>
<dbReference type="FunCoup" id="Q9HGP4">
    <property type="interactions" value="734"/>
</dbReference>
<dbReference type="STRING" id="284812.Q9HGP4"/>
<dbReference type="iPTMnet" id="Q9HGP4"/>
<dbReference type="PaxDb" id="4896-SPAC631.02.1"/>
<dbReference type="EnsemblFungi" id="SPAC631.02.1">
    <property type="protein sequence ID" value="SPAC631.02.1:pep"/>
    <property type="gene ID" value="SPAC631.02"/>
</dbReference>
<dbReference type="PomBase" id="SPAC631.02"/>
<dbReference type="VEuPathDB" id="FungiDB:SPAC631.02"/>
<dbReference type="eggNOG" id="KOG1474">
    <property type="taxonomic scope" value="Eukaryota"/>
</dbReference>
<dbReference type="HOGENOM" id="CLU_001499_4_2_1"/>
<dbReference type="InParanoid" id="Q9HGP4"/>
<dbReference type="OMA" id="PITYEMQ"/>
<dbReference type="PRO" id="PR:Q9HGP4"/>
<dbReference type="Proteomes" id="UP000002485">
    <property type="component" value="Chromosome I"/>
</dbReference>
<dbReference type="GO" id="GO:0000785">
    <property type="term" value="C:chromatin"/>
    <property type="evidence" value="ECO:0000314"/>
    <property type="project" value="PomBase"/>
</dbReference>
<dbReference type="GO" id="GO:0005634">
    <property type="term" value="C:nucleus"/>
    <property type="evidence" value="ECO:0007005"/>
    <property type="project" value="PomBase"/>
</dbReference>
<dbReference type="GO" id="GO:0042393">
    <property type="term" value="F:histone binding"/>
    <property type="evidence" value="ECO:0000314"/>
    <property type="project" value="PomBase"/>
</dbReference>
<dbReference type="GO" id="GO:0070577">
    <property type="term" value="F:lysine-acetylated histone binding"/>
    <property type="evidence" value="ECO:0000318"/>
    <property type="project" value="GO_Central"/>
</dbReference>
<dbReference type="GO" id="GO:0006338">
    <property type="term" value="P:chromatin remodeling"/>
    <property type="evidence" value="ECO:0000318"/>
    <property type="project" value="GO_Central"/>
</dbReference>
<dbReference type="GO" id="GO:0140861">
    <property type="term" value="P:DNA repair-dependent chromatin remodeling"/>
    <property type="evidence" value="ECO:0000315"/>
    <property type="project" value="PomBase"/>
</dbReference>
<dbReference type="GO" id="GO:0033696">
    <property type="term" value="P:heterochromatin boundary formation"/>
    <property type="evidence" value="ECO:0000315"/>
    <property type="project" value="PomBase"/>
</dbReference>
<dbReference type="CDD" id="cd05500">
    <property type="entry name" value="Bromo_BDF1_2_I"/>
    <property type="match status" value="1"/>
</dbReference>
<dbReference type="CDD" id="cd05498">
    <property type="entry name" value="Bromo_Brdt_II_like"/>
    <property type="match status" value="1"/>
</dbReference>
<dbReference type="FunFam" id="1.20.920.10:FF:000072">
    <property type="entry name" value="Bromodomain-containing factor 2"/>
    <property type="match status" value="1"/>
</dbReference>
<dbReference type="Gene3D" id="1.20.1270.220">
    <property type="match status" value="1"/>
</dbReference>
<dbReference type="Gene3D" id="1.20.920.10">
    <property type="entry name" value="Bromodomain-like"/>
    <property type="match status" value="2"/>
</dbReference>
<dbReference type="InterPro" id="IPR043509">
    <property type="entry name" value="Bromo_Brdt_II"/>
</dbReference>
<dbReference type="InterPro" id="IPR050935">
    <property type="entry name" value="Bromo_chromatin_reader"/>
</dbReference>
<dbReference type="InterPro" id="IPR001487">
    <property type="entry name" value="Bromodomain"/>
</dbReference>
<dbReference type="InterPro" id="IPR036427">
    <property type="entry name" value="Bromodomain-like_sf"/>
</dbReference>
<dbReference type="InterPro" id="IPR018359">
    <property type="entry name" value="Bromodomain_CS"/>
</dbReference>
<dbReference type="InterPro" id="IPR027353">
    <property type="entry name" value="NET_dom"/>
</dbReference>
<dbReference type="InterPro" id="IPR038336">
    <property type="entry name" value="NET_sf"/>
</dbReference>
<dbReference type="PANTHER" id="PTHR22880:SF242">
    <property type="entry name" value="BROMODOMAIN-CONTAINING PROTEIN C631.02"/>
    <property type="match status" value="1"/>
</dbReference>
<dbReference type="PANTHER" id="PTHR22880">
    <property type="entry name" value="FALZ-RELATED BROMODOMAIN-CONTAINING PROTEINS"/>
    <property type="match status" value="1"/>
</dbReference>
<dbReference type="Pfam" id="PF17035">
    <property type="entry name" value="BET"/>
    <property type="match status" value="1"/>
</dbReference>
<dbReference type="Pfam" id="PF00439">
    <property type="entry name" value="Bromodomain"/>
    <property type="match status" value="2"/>
</dbReference>
<dbReference type="PRINTS" id="PR00503">
    <property type="entry name" value="BROMODOMAIN"/>
</dbReference>
<dbReference type="SMART" id="SM00297">
    <property type="entry name" value="BROMO"/>
    <property type="match status" value="2"/>
</dbReference>
<dbReference type="SUPFAM" id="SSF47370">
    <property type="entry name" value="Bromodomain"/>
    <property type="match status" value="2"/>
</dbReference>
<dbReference type="PROSITE" id="PS00633">
    <property type="entry name" value="BROMODOMAIN_1"/>
    <property type="match status" value="1"/>
</dbReference>
<dbReference type="PROSITE" id="PS50014">
    <property type="entry name" value="BROMODOMAIN_2"/>
    <property type="match status" value="2"/>
</dbReference>
<dbReference type="PROSITE" id="PS51525">
    <property type="entry name" value="NET"/>
    <property type="match status" value="1"/>
</dbReference>
<proteinExistence type="evidence at protein level"/>
<reference key="1">
    <citation type="journal article" date="2002" name="Nature">
        <title>The genome sequence of Schizosaccharomyces pombe.</title>
        <authorList>
            <person name="Wood V."/>
            <person name="Gwilliam R."/>
            <person name="Rajandream M.A."/>
            <person name="Lyne M.H."/>
            <person name="Lyne R."/>
            <person name="Stewart A."/>
            <person name="Sgouros J.G."/>
            <person name="Peat N."/>
            <person name="Hayles J."/>
            <person name="Baker S.G."/>
            <person name="Basham D."/>
            <person name="Bowman S."/>
            <person name="Brooks K."/>
            <person name="Brown D."/>
            <person name="Brown S."/>
            <person name="Chillingworth T."/>
            <person name="Churcher C.M."/>
            <person name="Collins M."/>
            <person name="Connor R."/>
            <person name="Cronin A."/>
            <person name="Davis P."/>
            <person name="Feltwell T."/>
            <person name="Fraser A."/>
            <person name="Gentles S."/>
            <person name="Goble A."/>
            <person name="Hamlin N."/>
            <person name="Harris D.E."/>
            <person name="Hidalgo J."/>
            <person name="Hodgson G."/>
            <person name="Holroyd S."/>
            <person name="Hornsby T."/>
            <person name="Howarth S."/>
            <person name="Huckle E.J."/>
            <person name="Hunt S."/>
            <person name="Jagels K."/>
            <person name="James K.D."/>
            <person name="Jones L."/>
            <person name="Jones M."/>
            <person name="Leather S."/>
            <person name="McDonald S."/>
            <person name="McLean J."/>
            <person name="Mooney P."/>
            <person name="Moule S."/>
            <person name="Mungall K.L."/>
            <person name="Murphy L.D."/>
            <person name="Niblett D."/>
            <person name="Odell C."/>
            <person name="Oliver K."/>
            <person name="O'Neil S."/>
            <person name="Pearson D."/>
            <person name="Quail M.A."/>
            <person name="Rabbinowitsch E."/>
            <person name="Rutherford K.M."/>
            <person name="Rutter S."/>
            <person name="Saunders D."/>
            <person name="Seeger K."/>
            <person name="Sharp S."/>
            <person name="Skelton J."/>
            <person name="Simmonds M.N."/>
            <person name="Squares R."/>
            <person name="Squares S."/>
            <person name="Stevens K."/>
            <person name="Taylor K."/>
            <person name="Taylor R.G."/>
            <person name="Tivey A."/>
            <person name="Walsh S.V."/>
            <person name="Warren T."/>
            <person name="Whitehead S."/>
            <person name="Woodward J.R."/>
            <person name="Volckaert G."/>
            <person name="Aert R."/>
            <person name="Robben J."/>
            <person name="Grymonprez B."/>
            <person name="Weltjens I."/>
            <person name="Vanstreels E."/>
            <person name="Rieger M."/>
            <person name="Schaefer M."/>
            <person name="Mueller-Auer S."/>
            <person name="Gabel C."/>
            <person name="Fuchs M."/>
            <person name="Duesterhoeft A."/>
            <person name="Fritzc C."/>
            <person name="Holzer E."/>
            <person name="Moestl D."/>
            <person name="Hilbert H."/>
            <person name="Borzym K."/>
            <person name="Langer I."/>
            <person name="Beck A."/>
            <person name="Lehrach H."/>
            <person name="Reinhardt R."/>
            <person name="Pohl T.M."/>
            <person name="Eger P."/>
            <person name="Zimmermann W."/>
            <person name="Wedler H."/>
            <person name="Wambutt R."/>
            <person name="Purnelle B."/>
            <person name="Goffeau A."/>
            <person name="Cadieu E."/>
            <person name="Dreano S."/>
            <person name="Gloux S."/>
            <person name="Lelaure V."/>
            <person name="Mottier S."/>
            <person name="Galibert F."/>
            <person name="Aves S.J."/>
            <person name="Xiang Z."/>
            <person name="Hunt C."/>
            <person name="Moore K."/>
            <person name="Hurst S.M."/>
            <person name="Lucas M."/>
            <person name="Rochet M."/>
            <person name="Gaillardin C."/>
            <person name="Tallada V.A."/>
            <person name="Garzon A."/>
            <person name="Thode G."/>
            <person name="Daga R.R."/>
            <person name="Cruzado L."/>
            <person name="Jimenez J."/>
            <person name="Sanchez M."/>
            <person name="del Rey F."/>
            <person name="Benito J."/>
            <person name="Dominguez A."/>
            <person name="Revuelta J.L."/>
            <person name="Moreno S."/>
            <person name="Armstrong J."/>
            <person name="Forsburg S.L."/>
            <person name="Cerutti L."/>
            <person name="Lowe T."/>
            <person name="McCombie W.R."/>
            <person name="Paulsen I."/>
            <person name="Potashkin J."/>
            <person name="Shpakovski G.V."/>
            <person name="Ussery D."/>
            <person name="Barrell B.G."/>
            <person name="Nurse P."/>
        </authorList>
    </citation>
    <scope>NUCLEOTIDE SEQUENCE [LARGE SCALE GENOMIC DNA]</scope>
    <source>
        <strain>972 / ATCC 24843</strain>
    </source>
</reference>
<reference key="2">
    <citation type="journal article" date="2011" name="Science">
        <title>Comparative functional genomics of the fission yeasts.</title>
        <authorList>
            <person name="Rhind N."/>
            <person name="Chen Z."/>
            <person name="Yassour M."/>
            <person name="Thompson D.A."/>
            <person name="Haas B.J."/>
            <person name="Habib N."/>
            <person name="Wapinski I."/>
            <person name="Roy S."/>
            <person name="Lin M.F."/>
            <person name="Heiman D.I."/>
            <person name="Young S.K."/>
            <person name="Furuya K."/>
            <person name="Guo Y."/>
            <person name="Pidoux A."/>
            <person name="Chen H.M."/>
            <person name="Robbertse B."/>
            <person name="Goldberg J.M."/>
            <person name="Aoki K."/>
            <person name="Bayne E.H."/>
            <person name="Berlin A.M."/>
            <person name="Desjardins C.A."/>
            <person name="Dobbs E."/>
            <person name="Dukaj L."/>
            <person name="Fan L."/>
            <person name="FitzGerald M.G."/>
            <person name="French C."/>
            <person name="Gujja S."/>
            <person name="Hansen K."/>
            <person name="Keifenheim D."/>
            <person name="Levin J.Z."/>
            <person name="Mosher R.A."/>
            <person name="Mueller C.A."/>
            <person name="Pfiffner J."/>
            <person name="Priest M."/>
            <person name="Russ C."/>
            <person name="Smialowska A."/>
            <person name="Swoboda P."/>
            <person name="Sykes S.M."/>
            <person name="Vaughn M."/>
            <person name="Vengrova S."/>
            <person name="Yoder R."/>
            <person name="Zeng Q."/>
            <person name="Allshire R."/>
            <person name="Baulcombe D."/>
            <person name="Birren B.W."/>
            <person name="Brown W."/>
            <person name="Ekwall K."/>
            <person name="Kellis M."/>
            <person name="Leatherwood J."/>
            <person name="Levin H."/>
            <person name="Margalit H."/>
            <person name="Martienssen R."/>
            <person name="Nieduszynski C.A."/>
            <person name="Spatafora J.W."/>
            <person name="Friedman N."/>
            <person name="Dalgaard J.Z."/>
            <person name="Baumann P."/>
            <person name="Niki H."/>
            <person name="Regev A."/>
            <person name="Nusbaum C."/>
        </authorList>
    </citation>
    <scope>REVISION OF GENE MODEL</scope>
</reference>
<reference key="3">
    <citation type="journal article" date="1997" name="DNA Res.">
        <title>Identification of open reading frames in Schizosaccharomyces pombe cDNAs.</title>
        <authorList>
            <person name="Yoshioka S."/>
            <person name="Kato K."/>
            <person name="Nakai K."/>
            <person name="Okayama H."/>
            <person name="Nojima H."/>
        </authorList>
    </citation>
    <scope>NUCLEOTIDE SEQUENCE [LARGE SCALE MRNA] OF 353-713</scope>
    <source>
        <strain>PR745</strain>
    </source>
</reference>
<reference key="4">
    <citation type="journal article" date="2006" name="Nat. Biotechnol.">
        <title>ORFeome cloning and global analysis of protein localization in the fission yeast Schizosaccharomyces pombe.</title>
        <authorList>
            <person name="Matsuyama A."/>
            <person name="Arai R."/>
            <person name="Yashiroda Y."/>
            <person name="Shirai A."/>
            <person name="Kamata A."/>
            <person name="Sekido S."/>
            <person name="Kobayashi Y."/>
            <person name="Hashimoto A."/>
            <person name="Hamamoto M."/>
            <person name="Hiraoka Y."/>
            <person name="Horinouchi S."/>
            <person name="Yoshida M."/>
        </authorList>
    </citation>
    <scope>SUBCELLULAR LOCATION [LARGE SCALE ANALYSIS]</scope>
</reference>
<reference key="5">
    <citation type="journal article" date="2008" name="J. Proteome Res.">
        <title>Phosphoproteome analysis of fission yeast.</title>
        <authorList>
            <person name="Wilson-Grady J.T."/>
            <person name="Villen J."/>
            <person name="Gygi S.P."/>
        </authorList>
    </citation>
    <scope>PHOSPHORYLATION [LARGE SCALE ANALYSIS] AT SER-162</scope>
    <scope>IDENTIFICATION BY MASS SPECTROMETRY</scope>
</reference>
<protein>
    <recommendedName>
        <fullName>Bromodomain-containing protein C631.02</fullName>
    </recommendedName>
</protein>
<organism>
    <name type="scientific">Schizosaccharomyces pombe (strain 972 / ATCC 24843)</name>
    <name type="common">Fission yeast</name>
    <dbReference type="NCBI Taxonomy" id="284812"/>
    <lineage>
        <taxon>Eukaryota</taxon>
        <taxon>Fungi</taxon>
        <taxon>Dikarya</taxon>
        <taxon>Ascomycota</taxon>
        <taxon>Taphrinomycotina</taxon>
        <taxon>Schizosaccharomycetes</taxon>
        <taxon>Schizosaccharomycetales</taxon>
        <taxon>Schizosaccharomycetaceae</taxon>
        <taxon>Schizosaccharomyces</taxon>
    </lineage>
</organism>
<feature type="chain" id="PRO_0000211221" description="Bromodomain-containing protein C631.02">
    <location>
        <begin position="1"/>
        <end position="727"/>
    </location>
</feature>
<feature type="domain" description="Bromo 1" evidence="1">
    <location>
        <begin position="229"/>
        <end position="335"/>
    </location>
</feature>
<feature type="domain" description="Bromo 2" evidence="1">
    <location>
        <begin position="388"/>
        <end position="497"/>
    </location>
</feature>
<feature type="domain" description="NET" evidence="2">
    <location>
        <begin position="570"/>
        <end position="650"/>
    </location>
</feature>
<feature type="region of interest" description="Disordered" evidence="3">
    <location>
        <begin position="27"/>
        <end position="231"/>
    </location>
</feature>
<feature type="region of interest" description="Disordered" evidence="3">
    <location>
        <begin position="341"/>
        <end position="369"/>
    </location>
</feature>
<feature type="region of interest" description="Disordered" evidence="3">
    <location>
        <begin position="699"/>
        <end position="727"/>
    </location>
</feature>
<feature type="compositionally biased region" description="Acidic residues" evidence="3">
    <location>
        <begin position="56"/>
        <end position="68"/>
    </location>
</feature>
<feature type="compositionally biased region" description="Basic and acidic residues" evidence="3">
    <location>
        <begin position="69"/>
        <end position="78"/>
    </location>
</feature>
<feature type="compositionally biased region" description="Polar residues" evidence="3">
    <location>
        <begin position="102"/>
        <end position="114"/>
    </location>
</feature>
<feature type="compositionally biased region" description="Basic and acidic residues" evidence="3">
    <location>
        <begin position="128"/>
        <end position="150"/>
    </location>
</feature>
<feature type="compositionally biased region" description="Polar residues" evidence="3">
    <location>
        <begin position="153"/>
        <end position="177"/>
    </location>
</feature>
<feature type="compositionally biased region" description="Basic and acidic residues" evidence="3">
    <location>
        <begin position="206"/>
        <end position="231"/>
    </location>
</feature>
<feature type="compositionally biased region" description="Acidic residues" evidence="3">
    <location>
        <begin position="712"/>
        <end position="727"/>
    </location>
</feature>
<feature type="modified residue" description="Phosphoserine" evidence="5">
    <location>
        <position position="162"/>
    </location>
</feature>
<name>YK82_SCHPO</name>
<keyword id="KW-0103">Bromodomain</keyword>
<keyword id="KW-0539">Nucleus</keyword>
<keyword id="KW-0597">Phosphoprotein</keyword>
<keyword id="KW-1185">Reference proteome</keyword>
<keyword id="KW-0677">Repeat</keyword>
<evidence type="ECO:0000255" key="1">
    <source>
        <dbReference type="PROSITE-ProRule" id="PRU00035"/>
    </source>
</evidence>
<evidence type="ECO:0000255" key="2">
    <source>
        <dbReference type="PROSITE-ProRule" id="PRU00857"/>
    </source>
</evidence>
<evidence type="ECO:0000256" key="3">
    <source>
        <dbReference type="SAM" id="MobiDB-lite"/>
    </source>
</evidence>
<evidence type="ECO:0000269" key="4">
    <source>
    </source>
</evidence>
<evidence type="ECO:0000269" key="5">
    <source>
    </source>
</evidence>
<evidence type="ECO:0000305" key="6"/>
<accession>Q9HGP4</accession>
<accession>P78808</accession>
<comment type="subcellular location">
    <subcellularLocation>
        <location evidence="4">Nucleus</location>
    </subcellularLocation>
</comment>
<comment type="similarity">
    <text evidence="6">Belongs to the BET family.</text>
</comment>